<sequence>MRLPTKEEIQRYWVNEGNKLILVILYTLGNIAAFVYTFVHYYNSPAFEVVGYGVCFARGCAQLLKLNCALILVPVLRNLLSFLRGTFLNNYVPFDKNIVFHKLIAWVICFATFGHVMAHFNNFRLYQDITPQEYKRILGIDYPNLTPIKYAFATLAGWTGHVVCIVMVLMYTSAVESIRRPMFEGFWYTHHLFVVFFGLLVVHGLHSILEPTSFWKWVIGPCALYIVERLIRLLRSKKTTMLIQARIHPSRVIEVRMKTERFKYKPGQYLFLNCPTIAQNEWHPFTITSAPEEDFVSCHINVVGNWTGKLSTLLNPDKKMGIVQENVLKSPDGKPILRIDGPFGAASEEVFKYKQVILVGAGIGVTPFASILKHIKYQMARTYNTTPLIDKVHFYWICRDRNSFEWFSGLIGELEMENHNNFLEIHPYLTGALSAQEIRDVMYGDEEKDLITGFTTPTQFGRPKWDEIFADHALRYAEKDVGVFFCGPKLLSKSLYKASTHYTKTTTCRFHYNKENF</sequence>
<reference key="1">
    <citation type="journal article" date="2005" name="Biochim. Biophys. Acta">
        <title>NADPH oxidase homologs are required for normal cell differentiation and morphogenesis in Dictyostelium discoideum.</title>
        <authorList>
            <person name="Lardy B."/>
            <person name="Bof M."/>
            <person name="Aubry L."/>
            <person name="Paclet M.H."/>
            <person name="Morel F."/>
            <person name="Satre M."/>
            <person name="Klein G."/>
        </authorList>
    </citation>
    <scope>NUCLEOTIDE SEQUENCE [GENOMIC DNA]</scope>
    <scope>DEVELOPMENTAL STAGE</scope>
    <scope>DISRUPTION PHENOTYPE</scope>
    <source>
        <strain>AX2</strain>
    </source>
</reference>
<reference key="2">
    <citation type="journal article" date="2005" name="Nature">
        <title>The genome of the social amoeba Dictyostelium discoideum.</title>
        <authorList>
            <person name="Eichinger L."/>
            <person name="Pachebat J.A."/>
            <person name="Gloeckner G."/>
            <person name="Rajandream M.A."/>
            <person name="Sucgang R."/>
            <person name="Berriman M."/>
            <person name="Song J."/>
            <person name="Olsen R."/>
            <person name="Szafranski K."/>
            <person name="Xu Q."/>
            <person name="Tunggal B."/>
            <person name="Kummerfeld S."/>
            <person name="Madera M."/>
            <person name="Konfortov B.A."/>
            <person name="Rivero F."/>
            <person name="Bankier A.T."/>
            <person name="Lehmann R."/>
            <person name="Hamlin N."/>
            <person name="Davies R."/>
            <person name="Gaudet P."/>
            <person name="Fey P."/>
            <person name="Pilcher K."/>
            <person name="Chen G."/>
            <person name="Saunders D."/>
            <person name="Sodergren E.J."/>
            <person name="Davis P."/>
            <person name="Kerhornou A."/>
            <person name="Nie X."/>
            <person name="Hall N."/>
            <person name="Anjard C."/>
            <person name="Hemphill L."/>
            <person name="Bason N."/>
            <person name="Farbrother P."/>
            <person name="Desany B."/>
            <person name="Just E."/>
            <person name="Morio T."/>
            <person name="Rost R."/>
            <person name="Churcher C.M."/>
            <person name="Cooper J."/>
            <person name="Haydock S."/>
            <person name="van Driessche N."/>
            <person name="Cronin A."/>
            <person name="Goodhead I."/>
            <person name="Muzny D.M."/>
            <person name="Mourier T."/>
            <person name="Pain A."/>
            <person name="Lu M."/>
            <person name="Harper D."/>
            <person name="Lindsay R."/>
            <person name="Hauser H."/>
            <person name="James K.D."/>
            <person name="Quiles M."/>
            <person name="Madan Babu M."/>
            <person name="Saito T."/>
            <person name="Buchrieser C."/>
            <person name="Wardroper A."/>
            <person name="Felder M."/>
            <person name="Thangavelu M."/>
            <person name="Johnson D."/>
            <person name="Knights A."/>
            <person name="Loulseged H."/>
            <person name="Mungall K.L."/>
            <person name="Oliver K."/>
            <person name="Price C."/>
            <person name="Quail M.A."/>
            <person name="Urushihara H."/>
            <person name="Hernandez J."/>
            <person name="Rabbinowitsch E."/>
            <person name="Steffen D."/>
            <person name="Sanders M."/>
            <person name="Ma J."/>
            <person name="Kohara Y."/>
            <person name="Sharp S."/>
            <person name="Simmonds M.N."/>
            <person name="Spiegler S."/>
            <person name="Tivey A."/>
            <person name="Sugano S."/>
            <person name="White B."/>
            <person name="Walker D."/>
            <person name="Woodward J.R."/>
            <person name="Winckler T."/>
            <person name="Tanaka Y."/>
            <person name="Shaulsky G."/>
            <person name="Schleicher M."/>
            <person name="Weinstock G.M."/>
            <person name="Rosenthal A."/>
            <person name="Cox E.C."/>
            <person name="Chisholm R.L."/>
            <person name="Gibbs R.A."/>
            <person name="Loomis W.F."/>
            <person name="Platzer M."/>
            <person name="Kay R.R."/>
            <person name="Williams J.G."/>
            <person name="Dear P.H."/>
            <person name="Noegel A.A."/>
            <person name="Barrell B.G."/>
            <person name="Kuspa A."/>
        </authorList>
    </citation>
    <scope>NUCLEOTIDE SEQUENCE [LARGE SCALE GENOMIC DNA]</scope>
    <source>
        <strain>AX4</strain>
    </source>
</reference>
<keyword id="KW-0249">Electron transport</keyword>
<keyword id="KW-0274">FAD</keyword>
<keyword id="KW-0285">Flavoprotein</keyword>
<keyword id="KW-0349">Heme</keyword>
<keyword id="KW-0408">Iron</keyword>
<keyword id="KW-0472">Membrane</keyword>
<keyword id="KW-0479">Metal-binding</keyword>
<keyword id="KW-0521">NADP</keyword>
<keyword id="KW-0560">Oxidoreductase</keyword>
<keyword id="KW-1185">Reference proteome</keyword>
<keyword id="KW-0812">Transmembrane</keyword>
<keyword id="KW-1133">Transmembrane helix</keyword>
<keyword id="KW-0813">Transport</keyword>
<protein>
    <recommendedName>
        <fullName>Superoxide-generating NADPH oxidase heavy chain subunit A</fullName>
        <ecNumber>1.-.-.-</ecNumber>
    </recommendedName>
    <alternativeName>
        <fullName>NADPH oxidase A</fullName>
    </alternativeName>
    <alternativeName>
        <fullName>Superoxide-generating NADPH oxidase flavocytochrome A</fullName>
    </alternativeName>
</protein>
<proteinExistence type="evidence at transcript level"/>
<organism>
    <name type="scientific">Dictyostelium discoideum</name>
    <name type="common">Social amoeba</name>
    <dbReference type="NCBI Taxonomy" id="44689"/>
    <lineage>
        <taxon>Eukaryota</taxon>
        <taxon>Amoebozoa</taxon>
        <taxon>Evosea</taxon>
        <taxon>Eumycetozoa</taxon>
        <taxon>Dictyostelia</taxon>
        <taxon>Dictyosteliales</taxon>
        <taxon>Dictyosteliaceae</taxon>
        <taxon>Dictyostelium</taxon>
    </lineage>
</organism>
<name>NOXA_DICDI</name>
<evidence type="ECO:0000250" key="1"/>
<evidence type="ECO:0000255" key="2"/>
<evidence type="ECO:0000255" key="3">
    <source>
        <dbReference type="PROSITE-ProRule" id="PRU00716"/>
    </source>
</evidence>
<evidence type="ECO:0000269" key="4">
    <source>
    </source>
</evidence>
<evidence type="ECO:0000305" key="5"/>
<accession>Q9XYS3</accession>
<accession>Q54H54</accession>
<gene>
    <name type="primary">noxA</name>
    <name type="ORF">DDB_G0289653</name>
</gene>
<feature type="chain" id="PRO_0000361527" description="Superoxide-generating NADPH oxidase heavy chain subunit A">
    <location>
        <begin position="1"/>
        <end position="517"/>
    </location>
</feature>
<feature type="topological domain" description="Cytoplasmic" evidence="2">
    <location>
        <begin position="1"/>
        <end position="19"/>
    </location>
</feature>
<feature type="transmembrane region" description="Helical" evidence="2">
    <location>
        <begin position="20"/>
        <end position="40"/>
    </location>
</feature>
<feature type="topological domain" description="Extracellular" evidence="2">
    <location>
        <begin position="41"/>
        <end position="62"/>
    </location>
</feature>
<feature type="transmembrane region" description="Helical" evidence="2">
    <location>
        <begin position="63"/>
        <end position="83"/>
    </location>
</feature>
<feature type="topological domain" description="Cytoplasmic" evidence="2">
    <location>
        <begin position="84"/>
        <end position="97"/>
    </location>
</feature>
<feature type="transmembrane region" description="Helical" evidence="2">
    <location>
        <begin position="98"/>
        <end position="118"/>
    </location>
</feature>
<feature type="topological domain" description="Extracellular" evidence="2">
    <location>
        <begin position="119"/>
        <end position="149"/>
    </location>
</feature>
<feature type="transmembrane region" description="Helical" evidence="2">
    <location>
        <begin position="150"/>
        <end position="170"/>
    </location>
</feature>
<feature type="topological domain" description="Cytoplasmic" evidence="2">
    <location>
        <begin position="171"/>
        <end position="184"/>
    </location>
</feature>
<feature type="transmembrane region" description="Helical" evidence="2">
    <location>
        <begin position="185"/>
        <end position="205"/>
    </location>
</feature>
<feature type="topological domain" description="Extracellular" evidence="2">
    <location>
        <position position="206"/>
    </location>
</feature>
<feature type="transmembrane region" description="Helical" evidence="2">
    <location>
        <begin position="207"/>
        <end position="227"/>
    </location>
</feature>
<feature type="topological domain" description="Cytoplasmic" evidence="2">
    <location>
        <begin position="228"/>
        <end position="517"/>
    </location>
</feature>
<feature type="domain" description="Ferric oxidoreductase">
    <location>
        <begin position="58"/>
        <end position="201"/>
    </location>
</feature>
<feature type="domain" description="FAD-binding FR-type" evidence="3">
    <location>
        <begin position="229"/>
        <end position="349"/>
    </location>
</feature>
<feature type="binding site" description="axial binding residue" evidence="1">
    <location>
        <position position="101"/>
    </location>
    <ligand>
        <name>heme</name>
        <dbReference type="ChEBI" id="CHEBI:30413"/>
    </ligand>
    <ligandPart>
        <name>Fe</name>
        <dbReference type="ChEBI" id="CHEBI:18248"/>
    </ligandPart>
</feature>
<feature type="binding site" description="axial binding residue" evidence="1">
    <location>
        <position position="115"/>
    </location>
    <ligand>
        <name>heme</name>
        <dbReference type="ChEBI" id="CHEBI:30413"/>
    </ligand>
    <ligandPart>
        <name>Fe</name>
        <dbReference type="ChEBI" id="CHEBI:18248"/>
    </ligandPart>
</feature>
<feature type="binding site" description="axial binding residue" evidence="1">
    <location>
        <position position="190"/>
    </location>
    <ligand>
        <name>heme</name>
        <dbReference type="ChEBI" id="CHEBI:30413"/>
    </ligand>
    <ligandPart>
        <name>Fe</name>
        <dbReference type="ChEBI" id="CHEBI:18248"/>
    </ligandPart>
</feature>
<feature type="binding site" description="axial binding residue" evidence="1">
    <location>
        <position position="203"/>
    </location>
    <ligand>
        <name>heme</name>
        <dbReference type="ChEBI" id="CHEBI:30413"/>
    </ligand>
    <ligandPart>
        <name>Fe</name>
        <dbReference type="ChEBI" id="CHEBI:18248"/>
    </ligandPart>
</feature>
<feature type="binding site" evidence="2">
    <location>
        <begin position="283"/>
        <end position="289"/>
    </location>
    <ligand>
        <name>FAD</name>
        <dbReference type="ChEBI" id="CHEBI:57692"/>
    </ligand>
</feature>
<dbReference type="EC" id="1.-.-.-"/>
<dbReference type="EMBL" id="AF123275">
    <property type="protein sequence ID" value="AAD22057.1"/>
    <property type="molecule type" value="Genomic_DNA"/>
</dbReference>
<dbReference type="EMBL" id="AAFI02000148">
    <property type="protein sequence ID" value="EAL62538.1"/>
    <property type="molecule type" value="Genomic_DNA"/>
</dbReference>
<dbReference type="RefSeq" id="XP_636064.1">
    <property type="nucleotide sequence ID" value="XM_630972.1"/>
</dbReference>
<dbReference type="SMR" id="Q9XYS3"/>
<dbReference type="FunCoup" id="Q9XYS3">
    <property type="interactions" value="86"/>
</dbReference>
<dbReference type="STRING" id="44689.Q9XYS3"/>
<dbReference type="PeroxiBase" id="6101">
    <property type="entry name" value="DdNOx01"/>
</dbReference>
<dbReference type="PaxDb" id="44689-DDB0191274"/>
<dbReference type="ABCD" id="Q9XYS3">
    <property type="antibodies" value="1 sequenced antibody"/>
</dbReference>
<dbReference type="EnsemblProtists" id="EAL62538">
    <property type="protein sequence ID" value="EAL62538"/>
    <property type="gene ID" value="DDB_G0289653"/>
</dbReference>
<dbReference type="GeneID" id="8627274"/>
<dbReference type="KEGG" id="ddi:DDB_G0289653"/>
<dbReference type="dictyBase" id="DDB_G0289653">
    <property type="gene designation" value="noxA"/>
</dbReference>
<dbReference type="VEuPathDB" id="AmoebaDB:DDB_G0289653"/>
<dbReference type="eggNOG" id="KOG0039">
    <property type="taxonomic scope" value="Eukaryota"/>
</dbReference>
<dbReference type="HOGENOM" id="CLU_005646_3_0_1"/>
<dbReference type="InParanoid" id="Q9XYS3"/>
<dbReference type="OMA" id="FTFAKEH"/>
<dbReference type="PhylomeDB" id="Q9XYS3"/>
<dbReference type="Reactome" id="R-DDI-209968">
    <property type="pathway name" value="Thyroxine biosynthesis"/>
</dbReference>
<dbReference type="Reactome" id="R-DDI-3299685">
    <property type="pathway name" value="Detoxification of Reactive Oxygen Species"/>
</dbReference>
<dbReference type="Reactome" id="R-DDI-6798695">
    <property type="pathway name" value="Neutrophil degranulation"/>
</dbReference>
<dbReference type="PRO" id="PR:Q9XYS3"/>
<dbReference type="Proteomes" id="UP000002195">
    <property type="component" value="Chromosome 5"/>
</dbReference>
<dbReference type="GO" id="GO:0043020">
    <property type="term" value="C:NADPH oxidase complex"/>
    <property type="evidence" value="ECO:0000318"/>
    <property type="project" value="GO_Central"/>
</dbReference>
<dbReference type="GO" id="GO:0005886">
    <property type="term" value="C:plasma membrane"/>
    <property type="evidence" value="ECO:0000318"/>
    <property type="project" value="GO_Central"/>
</dbReference>
<dbReference type="GO" id="GO:0050660">
    <property type="term" value="F:flavin adenine dinucleotide binding"/>
    <property type="evidence" value="ECO:0000250"/>
    <property type="project" value="dictyBase"/>
</dbReference>
<dbReference type="GO" id="GO:0020037">
    <property type="term" value="F:heme binding"/>
    <property type="evidence" value="ECO:0000250"/>
    <property type="project" value="dictyBase"/>
</dbReference>
<dbReference type="GO" id="GO:0046872">
    <property type="term" value="F:metal ion binding"/>
    <property type="evidence" value="ECO:0007669"/>
    <property type="project" value="UniProtKB-KW"/>
</dbReference>
<dbReference type="GO" id="GO:0016175">
    <property type="term" value="F:superoxide-generating NAD(P)H oxidase activity"/>
    <property type="evidence" value="ECO:0000316"/>
    <property type="project" value="dictyBase"/>
</dbReference>
<dbReference type="GO" id="GO:0006952">
    <property type="term" value="P:defense response"/>
    <property type="evidence" value="ECO:0000318"/>
    <property type="project" value="GO_Central"/>
</dbReference>
<dbReference type="GO" id="GO:0042742">
    <property type="term" value="P:defense response to bacterium"/>
    <property type="evidence" value="ECO:0000316"/>
    <property type="project" value="dictyBase"/>
</dbReference>
<dbReference type="GO" id="GO:0050829">
    <property type="term" value="P:defense response to Gram-negative bacterium"/>
    <property type="evidence" value="ECO:0000315"/>
    <property type="project" value="dictyBase"/>
</dbReference>
<dbReference type="GO" id="GO:0031640">
    <property type="term" value="P:killing of cells of another organism"/>
    <property type="evidence" value="ECO:0000314"/>
    <property type="project" value="dictyBase"/>
</dbReference>
<dbReference type="GO" id="GO:0030587">
    <property type="term" value="P:sorocarp development"/>
    <property type="evidence" value="ECO:0000315"/>
    <property type="project" value="dictyBase"/>
</dbReference>
<dbReference type="GO" id="GO:0030435">
    <property type="term" value="P:sporulation resulting in formation of a cellular spore"/>
    <property type="evidence" value="ECO:0000315"/>
    <property type="project" value="dictyBase"/>
</dbReference>
<dbReference type="GO" id="GO:0042554">
    <property type="term" value="P:superoxide anion generation"/>
    <property type="evidence" value="ECO:0000250"/>
    <property type="project" value="dictyBase"/>
</dbReference>
<dbReference type="CDD" id="cd06186">
    <property type="entry name" value="NOX_Duox_like_FAD_NADP"/>
    <property type="match status" value="1"/>
</dbReference>
<dbReference type="FunFam" id="2.40.30.10:FF:000059">
    <property type="entry name" value="dual oxidase isoform X1"/>
    <property type="match status" value="1"/>
</dbReference>
<dbReference type="FunFam" id="3.40.50.80:FF:000004">
    <property type="entry name" value="NADPH oxidase isoform 2"/>
    <property type="match status" value="1"/>
</dbReference>
<dbReference type="Gene3D" id="3.40.50.80">
    <property type="entry name" value="Nucleotide-binding domain of ferredoxin-NADP reductase (FNR) module"/>
    <property type="match status" value="1"/>
</dbReference>
<dbReference type="Gene3D" id="2.40.30.10">
    <property type="entry name" value="Translation factors"/>
    <property type="match status" value="1"/>
</dbReference>
<dbReference type="InterPro" id="IPR013112">
    <property type="entry name" value="FAD-bd_8"/>
</dbReference>
<dbReference type="InterPro" id="IPR017927">
    <property type="entry name" value="FAD-bd_FR_type"/>
</dbReference>
<dbReference type="InterPro" id="IPR013130">
    <property type="entry name" value="Fe3_Rdtase_TM_dom"/>
</dbReference>
<dbReference type="InterPro" id="IPR013121">
    <property type="entry name" value="Fe_red_NAD-bd_6"/>
</dbReference>
<dbReference type="InterPro" id="IPR039261">
    <property type="entry name" value="FNR_nucleotide-bd"/>
</dbReference>
<dbReference type="InterPro" id="IPR050369">
    <property type="entry name" value="RBOH/FRE"/>
</dbReference>
<dbReference type="InterPro" id="IPR017938">
    <property type="entry name" value="Riboflavin_synthase-like_b-brl"/>
</dbReference>
<dbReference type="PANTHER" id="PTHR11972">
    <property type="entry name" value="NADPH OXIDASE"/>
    <property type="match status" value="1"/>
</dbReference>
<dbReference type="PANTHER" id="PTHR11972:SF153">
    <property type="entry name" value="SUPEROXIDE-GENERATING NADPH OXIDASE HEAVY CHAIN SUBUNIT A"/>
    <property type="match status" value="1"/>
</dbReference>
<dbReference type="Pfam" id="PF08022">
    <property type="entry name" value="FAD_binding_8"/>
    <property type="match status" value="1"/>
</dbReference>
<dbReference type="Pfam" id="PF01794">
    <property type="entry name" value="Ferric_reduct"/>
    <property type="match status" value="1"/>
</dbReference>
<dbReference type="Pfam" id="PF08030">
    <property type="entry name" value="NAD_binding_6"/>
    <property type="match status" value="1"/>
</dbReference>
<dbReference type="SFLD" id="SFLDS00052">
    <property type="entry name" value="Ferric_Reductase_Domain"/>
    <property type="match status" value="1"/>
</dbReference>
<dbReference type="SFLD" id="SFLDG01168">
    <property type="entry name" value="Ferric_reductase_subgroup_(FRE"/>
    <property type="match status" value="1"/>
</dbReference>
<dbReference type="SFLD" id="SFLDG01169">
    <property type="entry name" value="NADPH_oxidase_subgroup_(NOX)"/>
    <property type="match status" value="1"/>
</dbReference>
<dbReference type="SUPFAM" id="SSF52343">
    <property type="entry name" value="Ferredoxin reductase-like, C-terminal NADP-linked domain"/>
    <property type="match status" value="1"/>
</dbReference>
<dbReference type="SUPFAM" id="SSF63380">
    <property type="entry name" value="Riboflavin synthase domain-like"/>
    <property type="match status" value="1"/>
</dbReference>
<dbReference type="PROSITE" id="PS51384">
    <property type="entry name" value="FAD_FR"/>
    <property type="match status" value="1"/>
</dbReference>
<comment type="function">
    <text evidence="1">Critical component of the membrane-bound oxidase that generates superoxide. It is the terminal component of a respiratory chain that transfers single electrons from cytoplasmic NADPH across the plasma membrane to molecular oxygen on the exterior (By similarity).</text>
</comment>
<comment type="cofactor">
    <cofactor evidence="5">
        <name>FAD</name>
        <dbReference type="ChEBI" id="CHEBI:57692"/>
    </cofactor>
</comment>
<comment type="subunit">
    <text evidence="1">Composed of a heavy chain and a light chain.</text>
</comment>
<comment type="subcellular location">
    <subcellularLocation>
        <location evidence="5">Membrane</location>
        <topology evidence="5">Multi-pass membrane protein</topology>
    </subcellularLocation>
</comment>
<comment type="developmental stage">
    <text evidence="4">Highly expressed during vegetative stage. Expression decreases during development and is very low in fruiting bodies.</text>
</comment>
<comment type="disruption phenotype">
    <text evidence="4">No visible phenotype on vegetative growth, but prevents formation of fruiting bodies.</text>
</comment>